<accession>B7LXV9</accession>
<comment type="catalytic activity">
    <reaction evidence="1">
        <text>(2R)-2-phosphoglycerate = (2R)-3-phosphoglycerate</text>
        <dbReference type="Rhea" id="RHEA:15901"/>
        <dbReference type="ChEBI" id="CHEBI:58272"/>
        <dbReference type="ChEBI" id="CHEBI:58289"/>
    </reaction>
</comment>
<comment type="pathway">
    <text evidence="1">Carbohydrate degradation; glycolysis; pyruvate from D-glyceraldehyde 3-phosphate: step 3/5.</text>
</comment>
<comment type="similarity">
    <text evidence="1">Belongs to the phosphoglycerate mutase family. GpmB subfamily.</text>
</comment>
<sequence length="215" mass="24065">MLQVYLVRHGETQWNAERRIQGQSDSPLTAKGEQQAMQVATRAKELGITHIISSDLGRTRRTAEIIAQACGCDIIFDSRLRELNMGVLEKRHIDSLTEEEENWRRQLVNGTVDGRIPEGESMQELSDRVNAALESCRDLPQGSRPLLVSHGIALGCLVSTILGLPAWAERRLRLRNCSISRVDYQESLWLASGWVVETAGDISHLDAPALDELQR</sequence>
<organism>
    <name type="scientific">Escherichia coli O8 (strain IAI1)</name>
    <dbReference type="NCBI Taxonomy" id="585034"/>
    <lineage>
        <taxon>Bacteria</taxon>
        <taxon>Pseudomonadati</taxon>
        <taxon>Pseudomonadota</taxon>
        <taxon>Gammaproteobacteria</taxon>
        <taxon>Enterobacterales</taxon>
        <taxon>Enterobacteriaceae</taxon>
        <taxon>Escherichia</taxon>
    </lineage>
</organism>
<reference key="1">
    <citation type="journal article" date="2009" name="PLoS Genet.">
        <title>Organised genome dynamics in the Escherichia coli species results in highly diverse adaptive paths.</title>
        <authorList>
            <person name="Touchon M."/>
            <person name="Hoede C."/>
            <person name="Tenaillon O."/>
            <person name="Barbe V."/>
            <person name="Baeriswyl S."/>
            <person name="Bidet P."/>
            <person name="Bingen E."/>
            <person name="Bonacorsi S."/>
            <person name="Bouchier C."/>
            <person name="Bouvet O."/>
            <person name="Calteau A."/>
            <person name="Chiapello H."/>
            <person name="Clermont O."/>
            <person name="Cruveiller S."/>
            <person name="Danchin A."/>
            <person name="Diard M."/>
            <person name="Dossat C."/>
            <person name="Karoui M.E."/>
            <person name="Frapy E."/>
            <person name="Garry L."/>
            <person name="Ghigo J.M."/>
            <person name="Gilles A.M."/>
            <person name="Johnson J."/>
            <person name="Le Bouguenec C."/>
            <person name="Lescat M."/>
            <person name="Mangenot S."/>
            <person name="Martinez-Jehanne V."/>
            <person name="Matic I."/>
            <person name="Nassif X."/>
            <person name="Oztas S."/>
            <person name="Petit M.A."/>
            <person name="Pichon C."/>
            <person name="Rouy Z."/>
            <person name="Ruf C.S."/>
            <person name="Schneider D."/>
            <person name="Tourret J."/>
            <person name="Vacherie B."/>
            <person name="Vallenet D."/>
            <person name="Medigue C."/>
            <person name="Rocha E.P.C."/>
            <person name="Denamur E."/>
        </authorList>
    </citation>
    <scope>NUCLEOTIDE SEQUENCE [LARGE SCALE GENOMIC DNA]</scope>
    <source>
        <strain>IAI1</strain>
    </source>
</reference>
<proteinExistence type="inferred from homology"/>
<evidence type="ECO:0000255" key="1">
    <source>
        <dbReference type="HAMAP-Rule" id="MF_01040"/>
    </source>
</evidence>
<name>GPMB_ECO8A</name>
<gene>
    <name evidence="1" type="primary">gpmB</name>
    <name type="ordered locus">ECIAI1_4620</name>
</gene>
<protein>
    <recommendedName>
        <fullName evidence="1">Probable phosphoglycerate mutase GpmB</fullName>
        <ecNumber evidence="1">5.4.2.-</ecNumber>
    </recommendedName>
    <alternativeName>
        <fullName evidence="1">PGAM</fullName>
    </alternativeName>
    <alternativeName>
        <fullName evidence="1">Phosphoglyceromutase</fullName>
    </alternativeName>
</protein>
<feature type="chain" id="PRO_1000136002" description="Probable phosphoglycerate mutase GpmB">
    <location>
        <begin position="1"/>
        <end position="215"/>
    </location>
</feature>
<feature type="active site" description="Tele-phosphohistidine intermediate" evidence="1">
    <location>
        <position position="9"/>
    </location>
</feature>
<feature type="active site" description="Proton donor/acceptor" evidence="1">
    <location>
        <position position="82"/>
    </location>
</feature>
<feature type="binding site" evidence="1">
    <location>
        <begin position="8"/>
        <end position="15"/>
    </location>
    <ligand>
        <name>substrate</name>
    </ligand>
</feature>
<feature type="binding site" evidence="1">
    <location>
        <begin position="21"/>
        <end position="22"/>
    </location>
    <ligand>
        <name>substrate</name>
    </ligand>
</feature>
<feature type="binding site" evidence="1">
    <location>
        <position position="58"/>
    </location>
    <ligand>
        <name>substrate</name>
    </ligand>
</feature>
<feature type="binding site" evidence="1">
    <location>
        <position position="60"/>
    </location>
    <ligand>
        <name>substrate</name>
    </ligand>
</feature>
<feature type="binding site" evidence="1">
    <location>
        <begin position="82"/>
        <end position="85"/>
    </location>
    <ligand>
        <name>substrate</name>
    </ligand>
</feature>
<feature type="binding site" evidence="1">
    <location>
        <begin position="104"/>
        <end position="105"/>
    </location>
    <ligand>
        <name>substrate</name>
    </ligand>
</feature>
<feature type="binding site" evidence="1">
    <location>
        <begin position="151"/>
        <end position="152"/>
    </location>
    <ligand>
        <name>substrate</name>
    </ligand>
</feature>
<feature type="site" description="Transition state stabilizer" evidence="1">
    <location>
        <position position="150"/>
    </location>
</feature>
<dbReference type="EC" id="5.4.2.-" evidence="1"/>
<dbReference type="EMBL" id="CU928160">
    <property type="protein sequence ID" value="CAR01360.1"/>
    <property type="molecule type" value="Genomic_DNA"/>
</dbReference>
<dbReference type="RefSeq" id="WP_000942344.1">
    <property type="nucleotide sequence ID" value="NC_011741.1"/>
</dbReference>
<dbReference type="SMR" id="B7LXV9"/>
<dbReference type="GeneID" id="93777450"/>
<dbReference type="KEGG" id="ecr:ECIAI1_4620"/>
<dbReference type="HOGENOM" id="CLU_033323_9_5_6"/>
<dbReference type="UniPathway" id="UPA00109">
    <property type="reaction ID" value="UER00186"/>
</dbReference>
<dbReference type="GO" id="GO:0005737">
    <property type="term" value="C:cytoplasm"/>
    <property type="evidence" value="ECO:0007669"/>
    <property type="project" value="TreeGrafter"/>
</dbReference>
<dbReference type="GO" id="GO:0016791">
    <property type="term" value="F:phosphatase activity"/>
    <property type="evidence" value="ECO:0007669"/>
    <property type="project" value="TreeGrafter"/>
</dbReference>
<dbReference type="GO" id="GO:0004619">
    <property type="term" value="F:phosphoglycerate mutase activity"/>
    <property type="evidence" value="ECO:0007669"/>
    <property type="project" value="UniProtKB-UniRule"/>
</dbReference>
<dbReference type="GO" id="GO:0006096">
    <property type="term" value="P:glycolytic process"/>
    <property type="evidence" value="ECO:0007669"/>
    <property type="project" value="UniProtKB-UniRule"/>
</dbReference>
<dbReference type="CDD" id="cd07067">
    <property type="entry name" value="HP_PGM_like"/>
    <property type="match status" value="1"/>
</dbReference>
<dbReference type="Gene3D" id="3.40.50.1240">
    <property type="entry name" value="Phosphoglycerate mutase-like"/>
    <property type="match status" value="1"/>
</dbReference>
<dbReference type="HAMAP" id="MF_01040">
    <property type="entry name" value="PGAM_GpmB"/>
    <property type="match status" value="1"/>
</dbReference>
<dbReference type="InterPro" id="IPR013078">
    <property type="entry name" value="His_Pase_superF_clade-1"/>
</dbReference>
<dbReference type="InterPro" id="IPR029033">
    <property type="entry name" value="His_PPase_superfam"/>
</dbReference>
<dbReference type="InterPro" id="IPR001345">
    <property type="entry name" value="PG/BPGM_mutase_AS"/>
</dbReference>
<dbReference type="InterPro" id="IPR050275">
    <property type="entry name" value="PGM_Phosphatase"/>
</dbReference>
<dbReference type="InterPro" id="IPR023086">
    <property type="entry name" value="Phosphoglycerate_mutase_GpmB"/>
</dbReference>
<dbReference type="NCBIfam" id="NF002901">
    <property type="entry name" value="PRK03482.1"/>
    <property type="match status" value="1"/>
</dbReference>
<dbReference type="PANTHER" id="PTHR48100">
    <property type="entry name" value="BROAD-SPECIFICITY PHOSPHATASE YOR283W-RELATED"/>
    <property type="match status" value="1"/>
</dbReference>
<dbReference type="PANTHER" id="PTHR48100:SF1">
    <property type="entry name" value="HISTIDINE PHOSPHATASE FAMILY PROTEIN-RELATED"/>
    <property type="match status" value="1"/>
</dbReference>
<dbReference type="Pfam" id="PF00300">
    <property type="entry name" value="His_Phos_1"/>
    <property type="match status" value="1"/>
</dbReference>
<dbReference type="SMART" id="SM00855">
    <property type="entry name" value="PGAM"/>
    <property type="match status" value="1"/>
</dbReference>
<dbReference type="SUPFAM" id="SSF53254">
    <property type="entry name" value="Phosphoglycerate mutase-like"/>
    <property type="match status" value="1"/>
</dbReference>
<dbReference type="PROSITE" id="PS00175">
    <property type="entry name" value="PG_MUTASE"/>
    <property type="match status" value="1"/>
</dbReference>
<keyword id="KW-0324">Glycolysis</keyword>
<keyword id="KW-0413">Isomerase</keyword>